<proteinExistence type="predicted"/>
<accession>P35671</accession>
<keyword id="KW-1003">Cell membrane</keyword>
<keyword id="KW-0472">Membrane</keyword>
<keyword id="KW-1185">Reference proteome</keyword>
<keyword id="KW-0843">Virulence</keyword>
<name>INVE_SALTY</name>
<gene>
    <name type="primary">invE</name>
    <name type="ordered locus">STM2897</name>
</gene>
<sequence>MIPGSTSGISFSRILSRQTSHQDATQHTDAQQAEIQQAAEDSSPGAEVQKFVQSTDEMSAALAQFRNRRDYEKKSSNLSNSFERVLEDEALPKAKQILKLISVHGGALEDFLRQARSLFPDPSDLVLVLRELLRRKDLEEIVRKKLESLLKHVEEQTDPKTLKAGINCALKARLFGKTLSLKPGLLRASYRQFIQSESHEVEIYSDWIASYGYQRRLVVLDFIEGSLLTDIDANDASCSRLEFGQLLRRLTQLKMLRSADLLFVSTLLSYSFTKAFNAEESSWLLLMLSLLQQPHEVDSLLADIIGLNALLLSHKEHASFLQIFYQVCKAIPSSLFYEEYWQEELLMALRSMTDIAYKHEMAEQRRTIEKLS</sequence>
<protein>
    <recommendedName>
        <fullName>Invasion protein InvE</fullName>
    </recommendedName>
</protein>
<comment type="function">
    <text evidence="2 3">Involved in the triggering of intracellular events that lead to microbial internalization. These events include increase in calcium level, redistribution of actin microfilaments, and changes in the normal structure of the microvilli. Encoded within the type III secretion system (SPI-1 T3SS), it is essential for the translocation of protein effectors into host cells. Forms a complex with SipB and SipC in the presence of their chaperone SicA. Positively regulates the secretion of SPI-1 T3SS effector proteins SipB, SipC and SipD and negatively influences the secretion of SipA, SopA and SptP.</text>
</comment>
<comment type="subcellular location">
    <subcellularLocation>
        <location evidence="2">Cell membrane</location>
        <topology evidence="2">Peripheral membrane protein</topology>
    </subcellularLocation>
    <text>Probably associated with a bacterial membrane-localized protein.</text>
</comment>
<dbReference type="EMBL" id="M90714">
    <property type="status" value="NOT_ANNOTATED_CDS"/>
    <property type="molecule type" value="Genomic_DNA"/>
</dbReference>
<dbReference type="EMBL" id="AE006468">
    <property type="protein sequence ID" value="AAL21777.1"/>
    <property type="molecule type" value="Genomic_DNA"/>
</dbReference>
<dbReference type="EMBL" id="U08280">
    <property type="protein sequence ID" value="AAA74041.1"/>
    <property type="molecule type" value="Genomic_DNA"/>
</dbReference>
<dbReference type="EMBL" id="X75302">
    <property type="protein sequence ID" value="CAA53050.2"/>
    <property type="molecule type" value="Genomic_DNA"/>
</dbReference>
<dbReference type="PIR" id="A46138">
    <property type="entry name" value="A46138"/>
</dbReference>
<dbReference type="RefSeq" id="NP_461818.1">
    <property type="nucleotide sequence ID" value="NC_003197.2"/>
</dbReference>
<dbReference type="RefSeq" id="WP_000612171.1">
    <property type="nucleotide sequence ID" value="NC_003197.2"/>
</dbReference>
<dbReference type="SMR" id="P35671"/>
<dbReference type="STRING" id="99287.STM2897"/>
<dbReference type="PaxDb" id="99287-STM2897"/>
<dbReference type="GeneID" id="1254420"/>
<dbReference type="KEGG" id="stm:STM2897"/>
<dbReference type="PATRIC" id="fig|99287.12.peg.3053"/>
<dbReference type="HOGENOM" id="CLU_056140_1_0_6"/>
<dbReference type="OMA" id="PKMGDDP"/>
<dbReference type="BioCyc" id="SENT99287:STM2897-MONOMER"/>
<dbReference type="Proteomes" id="UP000001014">
    <property type="component" value="Chromosome"/>
</dbReference>
<dbReference type="GO" id="GO:0009986">
    <property type="term" value="C:cell surface"/>
    <property type="evidence" value="ECO:0007669"/>
    <property type="project" value="InterPro"/>
</dbReference>
<dbReference type="GO" id="GO:0019867">
    <property type="term" value="C:outer membrane"/>
    <property type="evidence" value="ECO:0007669"/>
    <property type="project" value="InterPro"/>
</dbReference>
<dbReference type="GO" id="GO:0005886">
    <property type="term" value="C:plasma membrane"/>
    <property type="evidence" value="ECO:0007669"/>
    <property type="project" value="UniProtKB-SubCell"/>
</dbReference>
<dbReference type="GO" id="GO:0050709">
    <property type="term" value="P:negative regulation of protein secretion"/>
    <property type="evidence" value="ECO:0007669"/>
    <property type="project" value="InterPro"/>
</dbReference>
<dbReference type="GO" id="GO:0030254">
    <property type="term" value="P:protein secretion by the type III secretion system"/>
    <property type="evidence" value="ECO:0007669"/>
    <property type="project" value="InterPro"/>
</dbReference>
<dbReference type="Gene3D" id="1.10.150.630">
    <property type="match status" value="1"/>
</dbReference>
<dbReference type="Gene3D" id="1.20.1280.240">
    <property type="match status" value="1"/>
</dbReference>
<dbReference type="InterPro" id="IPR010812">
    <property type="entry name" value="HrpJ-like"/>
</dbReference>
<dbReference type="InterPro" id="IPR003520">
    <property type="entry name" value="Invas_InvE"/>
</dbReference>
<dbReference type="InterPro" id="IPR013401">
    <property type="entry name" value="T3SS_LcrE"/>
</dbReference>
<dbReference type="NCBIfam" id="TIGR02568">
    <property type="entry name" value="LcrE"/>
    <property type="match status" value="1"/>
</dbReference>
<dbReference type="NCBIfam" id="NF011866">
    <property type="entry name" value="PRK15338.1"/>
    <property type="match status" value="1"/>
</dbReference>
<dbReference type="Pfam" id="PF07201">
    <property type="entry name" value="HrpJ"/>
    <property type="match status" value="1"/>
</dbReference>
<dbReference type="PRINTS" id="PR01344">
    <property type="entry name" value="INVEPROTEIN"/>
</dbReference>
<dbReference type="SUPFAM" id="SSF140591">
    <property type="entry name" value="Type III secretion system domain"/>
    <property type="match status" value="1"/>
</dbReference>
<reference key="1">
    <citation type="journal article" date="1992" name="Proc. Natl. Acad. Sci. U.S.A.">
        <title>Identification and molecular characterization of a Salmonella typhimurium gene involved in triggering the internalization of salmonellae into cultured epithelial cells.</title>
        <authorList>
            <person name="Ginocchio C."/>
            <person name="Pace J."/>
            <person name="Galan J.E."/>
        </authorList>
    </citation>
    <scope>NUCLEOTIDE SEQUENCE [GENOMIC DNA]</scope>
    <scope>FUNCTION</scope>
    <source>
        <strain>SR-11</strain>
    </source>
</reference>
<reference key="2">
    <citation type="journal article" date="2001" name="Nature">
        <title>Complete genome sequence of Salmonella enterica serovar Typhimurium LT2.</title>
        <authorList>
            <person name="McClelland M."/>
            <person name="Sanderson K.E."/>
            <person name="Spieth J."/>
            <person name="Clifton S.W."/>
            <person name="Latreille P."/>
            <person name="Courtney L."/>
            <person name="Porwollik S."/>
            <person name="Ali J."/>
            <person name="Dante M."/>
            <person name="Du F."/>
            <person name="Hou S."/>
            <person name="Layman D."/>
            <person name="Leonard S."/>
            <person name="Nguyen C."/>
            <person name="Scott K."/>
            <person name="Holmes A."/>
            <person name="Grewal N."/>
            <person name="Mulvaney E."/>
            <person name="Ryan E."/>
            <person name="Sun H."/>
            <person name="Florea L."/>
            <person name="Miller W."/>
            <person name="Stoneking T."/>
            <person name="Nhan M."/>
            <person name="Waterston R."/>
            <person name="Wilson R.K."/>
        </authorList>
    </citation>
    <scope>NUCLEOTIDE SEQUENCE [LARGE SCALE GENOMIC DNA]</scope>
    <source>
        <strain>LT2 / SGSC1412 / ATCC 700720</strain>
    </source>
</reference>
<reference key="3">
    <citation type="journal article" date="1994" name="Mol. Microbiol.">
        <title>The Salmonella typhimurium invasion genes invF and invG encode homologues of the AraC and PulD family of proteins.</title>
        <authorList>
            <person name="Kaniga K."/>
            <person name="Bossio J.C."/>
            <person name="Galan J.E."/>
        </authorList>
    </citation>
    <scope>NUCLEOTIDE SEQUENCE [GENOMIC DNA] OF 1-69</scope>
    <source>
        <strain>SR-11</strain>
    </source>
</reference>
<reference key="4">
    <citation type="journal article" date="1995" name="Infect. Immun.">
        <title>Biological and genetic characterization of TnphoA mutants of Salmonella typhimurium TML in the context of gastroenteritis.</title>
        <authorList>
            <person name="Lodge J."/>
            <person name="Douce G.R."/>
            <person name="Amin I.I."/>
            <person name="Bolton A.J."/>
            <person name="Martin G.D."/>
            <person name="Chatfield S."/>
            <person name="Dougan G."/>
            <person name="Brown N.L."/>
            <person name="Stephen J."/>
        </authorList>
    </citation>
    <scope>NUCLEOTIDE SEQUENCE [GENOMIC DNA] OF 1-5</scope>
    <source>
        <strain>TML</strain>
    </source>
</reference>
<reference key="5">
    <citation type="journal article" date="2002" name="J. Bacteriol.">
        <title>Salmonella type III secretion-associated protein InvE controls translocation of effector proteins into host cells.</title>
        <authorList>
            <person name="Kubori T."/>
            <person name="Galan J.E."/>
        </authorList>
    </citation>
    <scope>FUNCTION</scope>
    <scope>SUBCELLULAR LOCATION</scope>
    <source>
        <strain>SB300</strain>
    </source>
</reference>
<evidence type="ECO:0000256" key="1">
    <source>
        <dbReference type="SAM" id="MobiDB-lite"/>
    </source>
</evidence>
<evidence type="ECO:0000269" key="2">
    <source>
    </source>
</evidence>
<evidence type="ECO:0000269" key="3">
    <source>
    </source>
</evidence>
<evidence type="ECO:0000305" key="4"/>
<feature type="chain" id="PRO_0000084211" description="Invasion protein InvE">
    <location>
        <begin position="1"/>
        <end position="372"/>
    </location>
</feature>
<feature type="region of interest" description="Disordered" evidence="1">
    <location>
        <begin position="1"/>
        <end position="46"/>
    </location>
</feature>
<feature type="compositionally biased region" description="Polar residues" evidence="1">
    <location>
        <begin position="1"/>
        <end position="19"/>
    </location>
</feature>
<feature type="compositionally biased region" description="Low complexity" evidence="1">
    <location>
        <begin position="21"/>
        <end position="40"/>
    </location>
</feature>
<feature type="sequence conflict" description="In Ref. 1; M90714 and 3; AAA74041." evidence="4" ref="1 3">
    <original>Q</original>
    <variation>E</variation>
    <location>
        <position position="64"/>
    </location>
</feature>
<feature type="sequence conflict" description="In Ref. 1; M90714." evidence="4" ref="1">
    <original>S</original>
    <variation>T</variation>
    <location>
        <position position="117"/>
    </location>
</feature>
<organism>
    <name type="scientific">Salmonella typhimurium (strain LT2 / SGSC1412 / ATCC 700720)</name>
    <dbReference type="NCBI Taxonomy" id="99287"/>
    <lineage>
        <taxon>Bacteria</taxon>
        <taxon>Pseudomonadati</taxon>
        <taxon>Pseudomonadota</taxon>
        <taxon>Gammaproteobacteria</taxon>
        <taxon>Enterobacterales</taxon>
        <taxon>Enterobacteriaceae</taxon>
        <taxon>Salmonella</taxon>
    </lineage>
</organism>